<sequence>MAISQQRKDELIKEYRVHETDTGSPEVQIAVLTAEITALNEHLREHKKDHHSRRGLLKMVGRRRHLLNYLRSKDIQRYRELIKSLGIRR</sequence>
<keyword id="KW-0687">Ribonucleoprotein</keyword>
<keyword id="KW-0689">Ribosomal protein</keyword>
<keyword id="KW-0694">RNA-binding</keyword>
<keyword id="KW-0699">rRNA-binding</keyword>
<evidence type="ECO:0000255" key="1">
    <source>
        <dbReference type="HAMAP-Rule" id="MF_01343"/>
    </source>
</evidence>
<evidence type="ECO:0000305" key="2"/>
<reference key="1">
    <citation type="journal article" date="2003" name="Mol. Microbiol.">
        <title>Genome-based analysis of virulence genes in a non-biofilm-forming Staphylococcus epidermidis strain (ATCC 12228).</title>
        <authorList>
            <person name="Zhang Y.-Q."/>
            <person name="Ren S.-X."/>
            <person name="Li H.-L."/>
            <person name="Wang Y.-X."/>
            <person name="Fu G."/>
            <person name="Yang J."/>
            <person name="Qin Z.-Q."/>
            <person name="Miao Y.-G."/>
            <person name="Wang W.-Y."/>
            <person name="Chen R.-S."/>
            <person name="Shen Y."/>
            <person name="Chen Z."/>
            <person name="Yuan Z.-H."/>
            <person name="Zhao G.-P."/>
            <person name="Qu D."/>
            <person name="Danchin A."/>
            <person name="Wen Y.-M."/>
        </authorList>
    </citation>
    <scope>NUCLEOTIDE SEQUENCE [LARGE SCALE GENOMIC DNA]</scope>
    <source>
        <strain>ATCC 12228 / FDA PCI 1200</strain>
    </source>
</reference>
<gene>
    <name evidence="1" type="primary">rpsO</name>
    <name type="ordered locus">SE_0950</name>
</gene>
<dbReference type="EMBL" id="AE015929">
    <property type="protein sequence ID" value="AAO04547.1"/>
    <property type="molecule type" value="Genomic_DNA"/>
</dbReference>
<dbReference type="RefSeq" id="NP_764505.1">
    <property type="nucleotide sequence ID" value="NC_004461.1"/>
</dbReference>
<dbReference type="RefSeq" id="WP_002439528.1">
    <property type="nucleotide sequence ID" value="NZ_WBME01000001.1"/>
</dbReference>
<dbReference type="SMR" id="Q8CST2"/>
<dbReference type="GeneID" id="50018915"/>
<dbReference type="KEGG" id="sep:SE_0950"/>
<dbReference type="PATRIC" id="fig|176280.10.peg.924"/>
<dbReference type="eggNOG" id="COG0184">
    <property type="taxonomic scope" value="Bacteria"/>
</dbReference>
<dbReference type="HOGENOM" id="CLU_148518_0_0_9"/>
<dbReference type="OrthoDB" id="9799262at2"/>
<dbReference type="Proteomes" id="UP000001411">
    <property type="component" value="Chromosome"/>
</dbReference>
<dbReference type="GO" id="GO:0022627">
    <property type="term" value="C:cytosolic small ribosomal subunit"/>
    <property type="evidence" value="ECO:0007669"/>
    <property type="project" value="TreeGrafter"/>
</dbReference>
<dbReference type="GO" id="GO:0019843">
    <property type="term" value="F:rRNA binding"/>
    <property type="evidence" value="ECO:0007669"/>
    <property type="project" value="UniProtKB-UniRule"/>
</dbReference>
<dbReference type="GO" id="GO:0003735">
    <property type="term" value="F:structural constituent of ribosome"/>
    <property type="evidence" value="ECO:0007669"/>
    <property type="project" value="InterPro"/>
</dbReference>
<dbReference type="GO" id="GO:0006412">
    <property type="term" value="P:translation"/>
    <property type="evidence" value="ECO:0007669"/>
    <property type="project" value="UniProtKB-UniRule"/>
</dbReference>
<dbReference type="CDD" id="cd00353">
    <property type="entry name" value="Ribosomal_S15p_S13e"/>
    <property type="match status" value="1"/>
</dbReference>
<dbReference type="FunFam" id="1.10.287.10:FF:000002">
    <property type="entry name" value="30S ribosomal protein S15"/>
    <property type="match status" value="1"/>
</dbReference>
<dbReference type="Gene3D" id="6.10.250.3130">
    <property type="match status" value="1"/>
</dbReference>
<dbReference type="Gene3D" id="1.10.287.10">
    <property type="entry name" value="S15/NS1, RNA-binding"/>
    <property type="match status" value="1"/>
</dbReference>
<dbReference type="HAMAP" id="MF_01343_B">
    <property type="entry name" value="Ribosomal_uS15_B"/>
    <property type="match status" value="1"/>
</dbReference>
<dbReference type="InterPro" id="IPR000589">
    <property type="entry name" value="Ribosomal_uS15"/>
</dbReference>
<dbReference type="InterPro" id="IPR005290">
    <property type="entry name" value="Ribosomal_uS15_bac-type"/>
</dbReference>
<dbReference type="InterPro" id="IPR009068">
    <property type="entry name" value="uS15_NS1_RNA-bd_sf"/>
</dbReference>
<dbReference type="NCBIfam" id="TIGR00952">
    <property type="entry name" value="S15_bact"/>
    <property type="match status" value="1"/>
</dbReference>
<dbReference type="PANTHER" id="PTHR23321">
    <property type="entry name" value="RIBOSOMAL PROTEIN S15, BACTERIAL AND ORGANELLAR"/>
    <property type="match status" value="1"/>
</dbReference>
<dbReference type="PANTHER" id="PTHR23321:SF26">
    <property type="entry name" value="SMALL RIBOSOMAL SUBUNIT PROTEIN US15M"/>
    <property type="match status" value="1"/>
</dbReference>
<dbReference type="Pfam" id="PF00312">
    <property type="entry name" value="Ribosomal_S15"/>
    <property type="match status" value="1"/>
</dbReference>
<dbReference type="SMART" id="SM01387">
    <property type="entry name" value="Ribosomal_S15"/>
    <property type="match status" value="1"/>
</dbReference>
<dbReference type="SUPFAM" id="SSF47060">
    <property type="entry name" value="S15/NS1 RNA-binding domain"/>
    <property type="match status" value="1"/>
</dbReference>
<dbReference type="PROSITE" id="PS00362">
    <property type="entry name" value="RIBOSOMAL_S15"/>
    <property type="match status" value="1"/>
</dbReference>
<accession>Q8CST2</accession>
<protein>
    <recommendedName>
        <fullName evidence="1">Small ribosomal subunit protein uS15</fullName>
    </recommendedName>
    <alternativeName>
        <fullName evidence="2">30S ribosomal protein S15</fullName>
    </alternativeName>
</protein>
<feature type="chain" id="PRO_0000115545" description="Small ribosomal subunit protein uS15">
    <location>
        <begin position="1"/>
        <end position="89"/>
    </location>
</feature>
<proteinExistence type="inferred from homology"/>
<name>RS15_STAES</name>
<comment type="function">
    <text evidence="1">One of the primary rRNA binding proteins, it binds directly to 16S rRNA where it helps nucleate assembly of the platform of the 30S subunit by binding and bridging several RNA helices of the 16S rRNA.</text>
</comment>
<comment type="function">
    <text evidence="1">Forms an intersubunit bridge (bridge B4) with the 23S rRNA of the 50S subunit in the ribosome.</text>
</comment>
<comment type="subunit">
    <text evidence="1">Part of the 30S ribosomal subunit. Forms a bridge to the 50S subunit in the 70S ribosome, contacting the 23S rRNA.</text>
</comment>
<comment type="similarity">
    <text evidence="1">Belongs to the universal ribosomal protein uS15 family.</text>
</comment>
<organism>
    <name type="scientific">Staphylococcus epidermidis (strain ATCC 12228 / FDA PCI 1200)</name>
    <dbReference type="NCBI Taxonomy" id="176280"/>
    <lineage>
        <taxon>Bacteria</taxon>
        <taxon>Bacillati</taxon>
        <taxon>Bacillota</taxon>
        <taxon>Bacilli</taxon>
        <taxon>Bacillales</taxon>
        <taxon>Staphylococcaceae</taxon>
        <taxon>Staphylococcus</taxon>
    </lineage>
</organism>